<accession>Q8YYP9</accession>
<comment type="function">
    <text evidence="1">Catalyzes the anti-1,4-elimination of the C-3 phosphate and the C-6 proR hydrogen from 5-enolpyruvylshikimate-3-phosphate (EPSP) to yield chorismate, which is the branch point compound that serves as the starting substrate for the three terminal pathways of aromatic amino acid biosynthesis. This reaction introduces a second double bond into the aromatic ring system.</text>
</comment>
<comment type="catalytic activity">
    <reaction evidence="1">
        <text>5-O-(1-carboxyvinyl)-3-phosphoshikimate = chorismate + phosphate</text>
        <dbReference type="Rhea" id="RHEA:21020"/>
        <dbReference type="ChEBI" id="CHEBI:29748"/>
        <dbReference type="ChEBI" id="CHEBI:43474"/>
        <dbReference type="ChEBI" id="CHEBI:57701"/>
        <dbReference type="EC" id="4.2.3.5"/>
    </reaction>
</comment>
<comment type="cofactor">
    <cofactor evidence="1">
        <name>FMNH2</name>
        <dbReference type="ChEBI" id="CHEBI:57618"/>
    </cofactor>
    <text evidence="1">Reduced FMN (FMNH(2)).</text>
</comment>
<comment type="pathway">
    <text evidence="1">Metabolic intermediate biosynthesis; chorismate biosynthesis; chorismate from D-erythrose 4-phosphate and phosphoenolpyruvate: step 7/7.</text>
</comment>
<comment type="subunit">
    <text evidence="1">Homotetramer.</text>
</comment>
<comment type="similarity">
    <text evidence="1">Belongs to the chorismate synthase family.</text>
</comment>
<feature type="chain" id="PRO_0000140536" description="Chorismate synthase">
    <location>
        <begin position="1"/>
        <end position="362"/>
    </location>
</feature>
<feature type="binding site" evidence="1">
    <location>
        <position position="47"/>
    </location>
    <ligand>
        <name>NADP(+)</name>
        <dbReference type="ChEBI" id="CHEBI:58349"/>
    </ligand>
</feature>
<feature type="binding site" evidence="1">
    <location>
        <begin position="124"/>
        <end position="126"/>
    </location>
    <ligand>
        <name>FMN</name>
        <dbReference type="ChEBI" id="CHEBI:58210"/>
    </ligand>
</feature>
<feature type="binding site" evidence="1">
    <location>
        <position position="286"/>
    </location>
    <ligand>
        <name>FMN</name>
        <dbReference type="ChEBI" id="CHEBI:58210"/>
    </ligand>
</feature>
<feature type="binding site" evidence="1">
    <location>
        <begin position="301"/>
        <end position="305"/>
    </location>
    <ligand>
        <name>FMN</name>
        <dbReference type="ChEBI" id="CHEBI:58210"/>
    </ligand>
</feature>
<feature type="binding site" evidence="1">
    <location>
        <position position="327"/>
    </location>
    <ligand>
        <name>FMN</name>
        <dbReference type="ChEBI" id="CHEBI:58210"/>
    </ligand>
</feature>
<keyword id="KW-0028">Amino-acid biosynthesis</keyword>
<keyword id="KW-0057">Aromatic amino acid biosynthesis</keyword>
<keyword id="KW-0274">FAD</keyword>
<keyword id="KW-0285">Flavoprotein</keyword>
<keyword id="KW-0288">FMN</keyword>
<keyword id="KW-0456">Lyase</keyword>
<keyword id="KW-0521">NADP</keyword>
<keyword id="KW-1185">Reference proteome</keyword>
<organism>
    <name type="scientific">Nostoc sp. (strain PCC 7120 / SAG 25.82 / UTEX 2576)</name>
    <dbReference type="NCBI Taxonomy" id="103690"/>
    <lineage>
        <taxon>Bacteria</taxon>
        <taxon>Bacillati</taxon>
        <taxon>Cyanobacteriota</taxon>
        <taxon>Cyanophyceae</taxon>
        <taxon>Nostocales</taxon>
        <taxon>Nostocaceae</taxon>
        <taxon>Nostoc</taxon>
    </lineage>
</organism>
<reference key="1">
    <citation type="journal article" date="2001" name="DNA Res.">
        <title>Complete genomic sequence of the filamentous nitrogen-fixing cyanobacterium Anabaena sp. strain PCC 7120.</title>
        <authorList>
            <person name="Kaneko T."/>
            <person name="Nakamura Y."/>
            <person name="Wolk C.P."/>
            <person name="Kuritz T."/>
            <person name="Sasamoto S."/>
            <person name="Watanabe A."/>
            <person name="Iriguchi M."/>
            <person name="Ishikawa A."/>
            <person name="Kawashima K."/>
            <person name="Kimura T."/>
            <person name="Kishida Y."/>
            <person name="Kohara M."/>
            <person name="Matsumoto M."/>
            <person name="Matsuno A."/>
            <person name="Muraki A."/>
            <person name="Nakazaki N."/>
            <person name="Shimpo S."/>
            <person name="Sugimoto M."/>
            <person name="Takazawa M."/>
            <person name="Yamada M."/>
            <person name="Yasuda M."/>
            <person name="Tabata S."/>
        </authorList>
    </citation>
    <scope>NUCLEOTIDE SEQUENCE [LARGE SCALE GENOMIC DNA]</scope>
    <source>
        <strain>PCC 7120 / SAG 25.82 / UTEX 2576</strain>
    </source>
</reference>
<sequence>MGNTFGHLFRITTFGESHGGGVGVVIDGCPPLLEISPEEIQLELDRRRPGQSKITTPRKEADTCEILSGVYEGKTLGTPISILVRNKDTRPQDYDEMAQKYRPSHADATYDAKYGIRNWQGGGRSSARETIGRVAAGAIAKKILRQVANVEVIGYVKRIKDLEGVVDPNTVTLDQVESNIVRCPDGELADRMIELIEQTGRQGDSIGGVVECVARNVPKGLGEPVFDKLEADIAKAVMSLPASKGFEIGSGFAGTLLTGFEHNDEYYIDENGEIRTVTNRSGGIQGGIANGENIILRVAFKPTATIRKEQKTVTREGEETLLAAKGRHDPCVLPRAVPMVEAMVALVLCDHLLRHHGQCKVL</sequence>
<proteinExistence type="inferred from homology"/>
<protein>
    <recommendedName>
        <fullName evidence="1">Chorismate synthase</fullName>
        <shortName evidence="1">CS</shortName>
        <ecNumber evidence="1">4.2.3.5</ecNumber>
    </recommendedName>
    <alternativeName>
        <fullName evidence="1">5-enolpyruvylshikimate-3-phosphate phospholyase</fullName>
    </alternativeName>
</protein>
<name>AROC_NOSS1</name>
<gene>
    <name evidence="1" type="primary">aroC</name>
    <name type="ordered locus">all0797</name>
</gene>
<dbReference type="EC" id="4.2.3.5" evidence="1"/>
<dbReference type="EMBL" id="BA000019">
    <property type="protein sequence ID" value="BAB72754.1"/>
    <property type="molecule type" value="Genomic_DNA"/>
</dbReference>
<dbReference type="PIR" id="AC1906">
    <property type="entry name" value="AC1906"/>
</dbReference>
<dbReference type="RefSeq" id="WP_010994971.1">
    <property type="nucleotide sequence ID" value="NZ_JACJQQ010000008.1"/>
</dbReference>
<dbReference type="SMR" id="Q8YYP9"/>
<dbReference type="STRING" id="103690.gene:10492808"/>
<dbReference type="GeneID" id="58723247"/>
<dbReference type="KEGG" id="ana:all0797"/>
<dbReference type="eggNOG" id="COG0082">
    <property type="taxonomic scope" value="Bacteria"/>
</dbReference>
<dbReference type="OrthoDB" id="9771806at2"/>
<dbReference type="UniPathway" id="UPA00053">
    <property type="reaction ID" value="UER00090"/>
</dbReference>
<dbReference type="Proteomes" id="UP000002483">
    <property type="component" value="Chromosome"/>
</dbReference>
<dbReference type="GO" id="GO:0005829">
    <property type="term" value="C:cytosol"/>
    <property type="evidence" value="ECO:0007669"/>
    <property type="project" value="TreeGrafter"/>
</dbReference>
<dbReference type="GO" id="GO:0004107">
    <property type="term" value="F:chorismate synthase activity"/>
    <property type="evidence" value="ECO:0007669"/>
    <property type="project" value="UniProtKB-UniRule"/>
</dbReference>
<dbReference type="GO" id="GO:0010181">
    <property type="term" value="F:FMN binding"/>
    <property type="evidence" value="ECO:0007669"/>
    <property type="project" value="TreeGrafter"/>
</dbReference>
<dbReference type="GO" id="GO:0008652">
    <property type="term" value="P:amino acid biosynthetic process"/>
    <property type="evidence" value="ECO:0007669"/>
    <property type="project" value="UniProtKB-KW"/>
</dbReference>
<dbReference type="GO" id="GO:0009073">
    <property type="term" value="P:aromatic amino acid family biosynthetic process"/>
    <property type="evidence" value="ECO:0007669"/>
    <property type="project" value="UniProtKB-KW"/>
</dbReference>
<dbReference type="GO" id="GO:0009423">
    <property type="term" value="P:chorismate biosynthetic process"/>
    <property type="evidence" value="ECO:0007669"/>
    <property type="project" value="UniProtKB-UniRule"/>
</dbReference>
<dbReference type="CDD" id="cd07304">
    <property type="entry name" value="Chorismate_synthase"/>
    <property type="match status" value="1"/>
</dbReference>
<dbReference type="FunFam" id="3.60.150.10:FF:000003">
    <property type="entry name" value="Chorismate synthase"/>
    <property type="match status" value="1"/>
</dbReference>
<dbReference type="Gene3D" id="3.60.150.10">
    <property type="entry name" value="Chorismate synthase AroC"/>
    <property type="match status" value="1"/>
</dbReference>
<dbReference type="HAMAP" id="MF_00300">
    <property type="entry name" value="Chorismate_synth"/>
    <property type="match status" value="1"/>
</dbReference>
<dbReference type="InterPro" id="IPR000453">
    <property type="entry name" value="Chorismate_synth"/>
</dbReference>
<dbReference type="InterPro" id="IPR035904">
    <property type="entry name" value="Chorismate_synth_AroC_sf"/>
</dbReference>
<dbReference type="InterPro" id="IPR020541">
    <property type="entry name" value="Chorismate_synthase_CS"/>
</dbReference>
<dbReference type="NCBIfam" id="TIGR00033">
    <property type="entry name" value="aroC"/>
    <property type="match status" value="1"/>
</dbReference>
<dbReference type="NCBIfam" id="NF003793">
    <property type="entry name" value="PRK05382.1"/>
    <property type="match status" value="1"/>
</dbReference>
<dbReference type="PANTHER" id="PTHR21085">
    <property type="entry name" value="CHORISMATE SYNTHASE"/>
    <property type="match status" value="1"/>
</dbReference>
<dbReference type="PANTHER" id="PTHR21085:SF0">
    <property type="entry name" value="CHORISMATE SYNTHASE"/>
    <property type="match status" value="1"/>
</dbReference>
<dbReference type="Pfam" id="PF01264">
    <property type="entry name" value="Chorismate_synt"/>
    <property type="match status" value="1"/>
</dbReference>
<dbReference type="PIRSF" id="PIRSF001456">
    <property type="entry name" value="Chorismate_synth"/>
    <property type="match status" value="1"/>
</dbReference>
<dbReference type="SUPFAM" id="SSF103263">
    <property type="entry name" value="Chorismate synthase, AroC"/>
    <property type="match status" value="1"/>
</dbReference>
<dbReference type="PROSITE" id="PS00787">
    <property type="entry name" value="CHORISMATE_SYNTHASE_1"/>
    <property type="match status" value="1"/>
</dbReference>
<dbReference type="PROSITE" id="PS00788">
    <property type="entry name" value="CHORISMATE_SYNTHASE_2"/>
    <property type="match status" value="1"/>
</dbReference>
<dbReference type="PROSITE" id="PS00789">
    <property type="entry name" value="CHORISMATE_SYNTHASE_3"/>
    <property type="match status" value="1"/>
</dbReference>
<evidence type="ECO:0000255" key="1">
    <source>
        <dbReference type="HAMAP-Rule" id="MF_00300"/>
    </source>
</evidence>